<dbReference type="EC" id="2.3.1.117" evidence="1"/>
<dbReference type="EMBL" id="CP000912">
    <property type="protein sequence ID" value="ABY39975.1"/>
    <property type="molecule type" value="Genomic_DNA"/>
</dbReference>
<dbReference type="RefSeq" id="WP_006074152.1">
    <property type="nucleotide sequence ID" value="NC_010167.1"/>
</dbReference>
<dbReference type="SMR" id="A9WW39"/>
<dbReference type="KEGG" id="bmt:BSUIS_B1024"/>
<dbReference type="HOGENOM" id="CLU_050859_0_1_5"/>
<dbReference type="UniPathway" id="UPA00034">
    <property type="reaction ID" value="UER00019"/>
</dbReference>
<dbReference type="Proteomes" id="UP000008545">
    <property type="component" value="Chromosome II"/>
</dbReference>
<dbReference type="GO" id="GO:0005737">
    <property type="term" value="C:cytoplasm"/>
    <property type="evidence" value="ECO:0007669"/>
    <property type="project" value="UniProtKB-SubCell"/>
</dbReference>
<dbReference type="GO" id="GO:0008666">
    <property type="term" value="F:2,3,4,5-tetrahydropyridine-2,6-dicarboxylate N-succinyltransferase activity"/>
    <property type="evidence" value="ECO:0007669"/>
    <property type="project" value="UniProtKB-UniRule"/>
</dbReference>
<dbReference type="GO" id="GO:0019877">
    <property type="term" value="P:diaminopimelate biosynthetic process"/>
    <property type="evidence" value="ECO:0007669"/>
    <property type="project" value="UniProtKB-UniRule"/>
</dbReference>
<dbReference type="GO" id="GO:0009089">
    <property type="term" value="P:lysine biosynthetic process via diaminopimelate"/>
    <property type="evidence" value="ECO:0007669"/>
    <property type="project" value="UniProtKB-UniRule"/>
</dbReference>
<dbReference type="CDD" id="cd03350">
    <property type="entry name" value="LbH_THP_succinylT"/>
    <property type="match status" value="1"/>
</dbReference>
<dbReference type="Gene3D" id="2.160.10.10">
    <property type="entry name" value="Hexapeptide repeat proteins"/>
    <property type="match status" value="1"/>
</dbReference>
<dbReference type="Gene3D" id="1.10.166.10">
    <property type="entry name" value="Tetrahydrodipicolinate-N-succinyltransferase, N-terminal domain"/>
    <property type="match status" value="1"/>
</dbReference>
<dbReference type="HAMAP" id="MF_00811">
    <property type="entry name" value="DapD"/>
    <property type="match status" value="1"/>
</dbReference>
<dbReference type="InterPro" id="IPR005664">
    <property type="entry name" value="DapD_Trfase_Hexpep_rpt_fam"/>
</dbReference>
<dbReference type="InterPro" id="IPR001451">
    <property type="entry name" value="Hexapep"/>
</dbReference>
<dbReference type="InterPro" id="IPR018357">
    <property type="entry name" value="Hexapep_transf_CS"/>
</dbReference>
<dbReference type="InterPro" id="IPR023180">
    <property type="entry name" value="THP_succinylTrfase_dom1"/>
</dbReference>
<dbReference type="InterPro" id="IPR037133">
    <property type="entry name" value="THP_succinylTrfase_N_sf"/>
</dbReference>
<dbReference type="InterPro" id="IPR050179">
    <property type="entry name" value="Trans_hexapeptide_repeat"/>
</dbReference>
<dbReference type="InterPro" id="IPR011004">
    <property type="entry name" value="Trimer_LpxA-like_sf"/>
</dbReference>
<dbReference type="NCBIfam" id="TIGR00965">
    <property type="entry name" value="dapD"/>
    <property type="match status" value="1"/>
</dbReference>
<dbReference type="NCBIfam" id="NF008808">
    <property type="entry name" value="PRK11830.1"/>
    <property type="match status" value="1"/>
</dbReference>
<dbReference type="PANTHER" id="PTHR43300:SF10">
    <property type="entry name" value="2,3,4,5-TETRAHYDROPYRIDINE-2,6-DICARBOXYLATE N-ACETYLTRANSFERASE"/>
    <property type="match status" value="1"/>
</dbReference>
<dbReference type="PANTHER" id="PTHR43300">
    <property type="entry name" value="ACETYLTRANSFERASE"/>
    <property type="match status" value="1"/>
</dbReference>
<dbReference type="Pfam" id="PF14602">
    <property type="entry name" value="Hexapep_2"/>
    <property type="match status" value="1"/>
</dbReference>
<dbReference type="Pfam" id="PF14805">
    <property type="entry name" value="THDPS_N_2"/>
    <property type="match status" value="1"/>
</dbReference>
<dbReference type="SUPFAM" id="SSF51161">
    <property type="entry name" value="Trimeric LpxA-like enzymes"/>
    <property type="match status" value="1"/>
</dbReference>
<dbReference type="PROSITE" id="PS00101">
    <property type="entry name" value="HEXAPEP_TRANSFERASES"/>
    <property type="match status" value="1"/>
</dbReference>
<gene>
    <name evidence="1" type="primary">dapD</name>
    <name type="ordered locus">BSUIS_B1024</name>
</gene>
<protein>
    <recommendedName>
        <fullName evidence="1">2,3,4,5-tetrahydropyridine-2,6-dicarboxylate N-succinyltransferase</fullName>
        <ecNumber evidence="1">2.3.1.117</ecNumber>
    </recommendedName>
    <alternativeName>
        <fullName evidence="1">Tetrahydrodipicolinate N-succinyltransferase</fullName>
        <shortName evidence="1">THDP succinyltransferase</shortName>
        <shortName evidence="1">THP succinyltransferase</shortName>
        <shortName evidence="1">Tetrahydropicolinate succinylase</shortName>
    </alternativeName>
</protein>
<comment type="catalytic activity">
    <reaction evidence="1">
        <text>(S)-2,3,4,5-tetrahydrodipicolinate + succinyl-CoA + H2O = (S)-2-succinylamino-6-oxoheptanedioate + CoA</text>
        <dbReference type="Rhea" id="RHEA:17325"/>
        <dbReference type="ChEBI" id="CHEBI:15377"/>
        <dbReference type="ChEBI" id="CHEBI:15685"/>
        <dbReference type="ChEBI" id="CHEBI:16845"/>
        <dbReference type="ChEBI" id="CHEBI:57287"/>
        <dbReference type="ChEBI" id="CHEBI:57292"/>
        <dbReference type="EC" id="2.3.1.117"/>
    </reaction>
</comment>
<comment type="pathway">
    <text evidence="1">Amino-acid biosynthesis; L-lysine biosynthesis via DAP pathway; LL-2,6-diaminopimelate from (S)-tetrahydrodipicolinate (succinylase route): step 1/3.</text>
</comment>
<comment type="subunit">
    <text evidence="1">Homotrimer.</text>
</comment>
<comment type="subcellular location">
    <subcellularLocation>
        <location evidence="1">Cytoplasm</location>
    </subcellularLocation>
</comment>
<comment type="similarity">
    <text evidence="1">Belongs to the transferase hexapeptide repeat family.</text>
</comment>
<evidence type="ECO:0000255" key="1">
    <source>
        <dbReference type="HAMAP-Rule" id="MF_00811"/>
    </source>
</evidence>
<accession>A9WW39</accession>
<proteinExistence type="inferred from homology"/>
<reference key="1">
    <citation type="submission" date="2007-12" db="EMBL/GenBank/DDBJ databases">
        <title>Brucella suis ATCC 23445 whole genome shotgun sequencing project.</title>
        <authorList>
            <person name="Setubal J.C."/>
            <person name="Bowns C."/>
            <person name="Boyle S."/>
            <person name="Crasta O.R."/>
            <person name="Czar M.J."/>
            <person name="Dharmanolla C."/>
            <person name="Gillespie J.J."/>
            <person name="Kenyon R.W."/>
            <person name="Lu J."/>
            <person name="Mane S."/>
            <person name="Mohapatra S."/>
            <person name="Nagrani S."/>
            <person name="Purkayastha A."/>
            <person name="Rajasimha H.K."/>
            <person name="Shallom J.M."/>
            <person name="Shallom S."/>
            <person name="Shukla M."/>
            <person name="Snyder E.E."/>
            <person name="Sobral B.W."/>
            <person name="Wattam A.R."/>
            <person name="Will R."/>
            <person name="Williams K."/>
            <person name="Yoo H."/>
            <person name="Bruce D."/>
            <person name="Detter C."/>
            <person name="Munk C."/>
            <person name="Brettin T.S."/>
        </authorList>
    </citation>
    <scope>NUCLEOTIDE SEQUENCE [LARGE SCALE GENOMIC DNA]</scope>
    <source>
        <strain>ATCC 23445 / NCTC 10510</strain>
    </source>
</reference>
<feature type="chain" id="PRO_1000083747" description="2,3,4,5-tetrahydropyridine-2,6-dicarboxylate N-succinyltransferase">
    <location>
        <begin position="1"/>
        <end position="284"/>
    </location>
</feature>
<feature type="binding site" evidence="1">
    <location>
        <position position="111"/>
    </location>
    <ligand>
        <name>substrate</name>
    </ligand>
</feature>
<feature type="binding site" evidence="1">
    <location>
        <position position="148"/>
    </location>
    <ligand>
        <name>substrate</name>
    </ligand>
</feature>
<organism>
    <name type="scientific">Brucella suis (strain ATCC 23445 / NCTC 10510)</name>
    <dbReference type="NCBI Taxonomy" id="470137"/>
    <lineage>
        <taxon>Bacteria</taxon>
        <taxon>Pseudomonadati</taxon>
        <taxon>Pseudomonadota</taxon>
        <taxon>Alphaproteobacteria</taxon>
        <taxon>Hyphomicrobiales</taxon>
        <taxon>Brucellaceae</taxon>
        <taxon>Brucella/Ochrobactrum group</taxon>
        <taxon>Brucella</taxon>
    </lineage>
</organism>
<keyword id="KW-0012">Acyltransferase</keyword>
<keyword id="KW-0028">Amino-acid biosynthesis</keyword>
<keyword id="KW-0963">Cytoplasm</keyword>
<keyword id="KW-0220">Diaminopimelate biosynthesis</keyword>
<keyword id="KW-0457">Lysine biosynthesis</keyword>
<keyword id="KW-0677">Repeat</keyword>
<keyword id="KW-0808">Transferase</keyword>
<sequence>MTKPDLASLEKTIEKAFDQRDGINTATRGEVREAVEQSLILLDRGEVRVAEKQADGNWHVNQWLKKAVLLSFRLNPMEVIKGGPGQSSWWDKVPSKFDGWTANEFEKAGFRAVPNCIVRHSAYIAPNAILMPSFVNLGAYVDKGAMIDTWATVGSCAQIGKNVHLSGGVGIGGVLEPMQAGPTIIEDNCFIGARSEVVEGCIVREGSVLGMGVFIGKSTKIVDRATGEVFYGEVPPYSVVVAGTMPGKNVPGENWGPSLYCAVIVKRADEKTRSKTSINELLRD</sequence>
<name>DAPD_BRUSI</name>